<sequence length="109" mass="11772">MRRGDIYTAAARGAYTGKPRPVLIIQDDRFDATASVTVVPFTTSDTDAPLLRIRIEPTPATGLSTVSSLMIDKVTTVPRSSLTHRVGRLAETDMVRTDRALLVFLGIAG</sequence>
<gene>
    <name type="primary">mazF</name>
    <name type="ordered locus">MSMEG_4448</name>
    <name type="ordered locus">MSMEI_4338</name>
</gene>
<proteinExistence type="evidence at protein level"/>
<organism>
    <name type="scientific">Mycolicibacterium smegmatis (strain ATCC 700084 / mc(2)155)</name>
    <name type="common">Mycobacterium smegmatis</name>
    <dbReference type="NCBI Taxonomy" id="246196"/>
    <lineage>
        <taxon>Bacteria</taxon>
        <taxon>Bacillati</taxon>
        <taxon>Actinomycetota</taxon>
        <taxon>Actinomycetes</taxon>
        <taxon>Mycobacteriales</taxon>
        <taxon>Mycobacteriaceae</taxon>
        <taxon>Mycolicibacterium</taxon>
    </lineage>
</organism>
<reference key="1">
    <citation type="submission" date="2006-10" db="EMBL/GenBank/DDBJ databases">
        <authorList>
            <person name="Fleischmann R.D."/>
            <person name="Dodson R.J."/>
            <person name="Haft D.H."/>
            <person name="Merkel J.S."/>
            <person name="Nelson W.C."/>
            <person name="Fraser C.M."/>
        </authorList>
    </citation>
    <scope>NUCLEOTIDE SEQUENCE [LARGE SCALE GENOMIC DNA]</scope>
    <source>
        <strain>ATCC 700084 / mc(2)155</strain>
    </source>
</reference>
<reference key="2">
    <citation type="journal article" date="2007" name="Genome Biol.">
        <title>Interrupted coding sequences in Mycobacterium smegmatis: authentic mutations or sequencing errors?</title>
        <authorList>
            <person name="Deshayes C."/>
            <person name="Perrodou E."/>
            <person name="Gallien S."/>
            <person name="Euphrasie D."/>
            <person name="Schaeffer C."/>
            <person name="Van-Dorsselaer A."/>
            <person name="Poch O."/>
            <person name="Lecompte O."/>
            <person name="Reyrat J.-M."/>
        </authorList>
    </citation>
    <scope>NUCLEOTIDE SEQUENCE [LARGE SCALE GENOMIC DNA]</scope>
    <source>
        <strain>ATCC 700084 / mc(2)155</strain>
    </source>
</reference>
<reference key="3">
    <citation type="journal article" date="2009" name="Genome Res.">
        <title>Ortho-proteogenomics: multiple proteomes investigation through orthology and a new MS-based protocol.</title>
        <authorList>
            <person name="Gallien S."/>
            <person name="Perrodou E."/>
            <person name="Carapito C."/>
            <person name="Deshayes C."/>
            <person name="Reyrat J.-M."/>
            <person name="Van Dorsselaer A."/>
            <person name="Poch O."/>
            <person name="Schaeffer C."/>
            <person name="Lecompte O."/>
        </authorList>
    </citation>
    <scope>NUCLEOTIDE SEQUENCE [LARGE SCALE GENOMIC DNA]</scope>
    <source>
        <strain>ATCC 700084 / mc(2)155</strain>
    </source>
</reference>
<reference key="4">
    <citation type="journal article" date="2012" name="J. Biol. Chem.">
        <title>Toxin-antitoxin systems of Mycobacterium smegmatis are essential for cell survival.</title>
        <authorList>
            <person name="Frampton R."/>
            <person name="Aggio R.B."/>
            <person name="Villas-Boas S.G."/>
            <person name="Arcus V.L."/>
            <person name="Cook G.M."/>
        </authorList>
    </citation>
    <scope>FUNCTION AS A TOXIN</scope>
    <scope>FUNCTION IN TRANSCRIPTION REGULATION</scope>
    <scope>INDUCTION</scope>
    <scope>DISRUPTION PHENOTYPE</scope>
    <source>
        <strain>ATCC 700084 / mc(2)155</strain>
    </source>
</reference>
<comment type="function">
    <text evidence="1 2">Toxic component of a type II toxin-antitoxin (TA) system. Upon overexpression inhibits cell growth and colony formation. Its toxic effect is neutralized by coexpression with cognate antitoxin MazE. In M.smegmatis 3 TA systems (VapB-VapC, MazE-MazF and Phd-Doc) may be involved in monitoring the nutritional supply and physiological state of the cell, linking catabolic with anabolic reactions (PubMed:22199354). Probably an endoribonuclease (By similarity).</text>
</comment>
<comment type="subunit">
    <text evidence="1">Forms a complex with cognate antitoxin MazE.</text>
</comment>
<comment type="induction">
    <text evidence="2">Constitutively expressed during exponential growth and early stationary phase, it decreases in late stationary phase; part of the mazE-mazF operon. Negatively autoregulated by one or both of MazE-MazF.</text>
</comment>
<comment type="disruption phenotype">
    <text evidence="2">The mazE-mazF operon is not essential. A triple TA mutant (missing vapB-vapC, mazE-mazF and phd-doc TA systems) survives antibiotic challenge, suggesting the TA systems are not required to generate drug-resistant cells. However the mutant is more sensitive to oxidative and heat stress, and does not survive long term starvation during aerobic growth on complex medium. There is a difference in the level of branched-chain amino acids, which may play a role in monitoring the nutritional supply and physiological state of the cell.</text>
</comment>
<comment type="similarity">
    <text evidence="4">Belongs to the PemK/MazF family.</text>
</comment>
<protein>
    <recommendedName>
        <fullName evidence="4">Probable endoribonuclease MazF</fullName>
        <ecNumber>3.1.-.-</ecNumber>
    </recommendedName>
    <alternativeName>
        <fullName evidence="3">Toxin MazF</fullName>
    </alternativeName>
</protein>
<evidence type="ECO:0000250" key="1">
    <source>
        <dbReference type="UniProtKB" id="P9WIH9"/>
    </source>
</evidence>
<evidence type="ECO:0000269" key="2">
    <source>
    </source>
</evidence>
<evidence type="ECO:0000303" key="3">
    <source>
    </source>
</evidence>
<evidence type="ECO:0000305" key="4"/>
<accession>A0R0N4</accession>
<feature type="chain" id="PRO_0000420844" description="Probable endoribonuclease MazF">
    <location>
        <begin position="1"/>
        <end position="109"/>
    </location>
</feature>
<keyword id="KW-0255">Endonuclease</keyword>
<keyword id="KW-0378">Hydrolase</keyword>
<keyword id="KW-0540">Nuclease</keyword>
<keyword id="KW-1185">Reference proteome</keyword>
<keyword id="KW-0678">Repressor</keyword>
<keyword id="KW-1277">Toxin-antitoxin system</keyword>
<keyword id="KW-0804">Transcription</keyword>
<keyword id="KW-0805">Transcription regulation</keyword>
<dbReference type="EC" id="3.1.-.-"/>
<dbReference type="EMBL" id="CP000480">
    <property type="protein sequence ID" value="ABK72484.1"/>
    <property type="molecule type" value="Genomic_DNA"/>
</dbReference>
<dbReference type="EMBL" id="CP001663">
    <property type="protein sequence ID" value="AFP40794.1"/>
    <property type="molecule type" value="Genomic_DNA"/>
</dbReference>
<dbReference type="RefSeq" id="WP_003895797.1">
    <property type="nucleotide sequence ID" value="NZ_SIJM01000026.1"/>
</dbReference>
<dbReference type="RefSeq" id="YP_888722.1">
    <property type="nucleotide sequence ID" value="NC_008596.1"/>
</dbReference>
<dbReference type="SMR" id="A0R0N4"/>
<dbReference type="STRING" id="246196.MSMEG_4448"/>
<dbReference type="PaxDb" id="246196-MSMEI_4338"/>
<dbReference type="KEGG" id="msb:LJ00_22010"/>
<dbReference type="KEGG" id="msg:MSMEI_4338"/>
<dbReference type="KEGG" id="msm:MSMEG_4448"/>
<dbReference type="PATRIC" id="fig|246196.56.peg.4440"/>
<dbReference type="eggNOG" id="COG2337">
    <property type="taxonomic scope" value="Bacteria"/>
</dbReference>
<dbReference type="OrthoDB" id="3196747at2"/>
<dbReference type="Proteomes" id="UP000000757">
    <property type="component" value="Chromosome"/>
</dbReference>
<dbReference type="Proteomes" id="UP000006158">
    <property type="component" value="Chromosome"/>
</dbReference>
<dbReference type="GO" id="GO:0003677">
    <property type="term" value="F:DNA binding"/>
    <property type="evidence" value="ECO:0007669"/>
    <property type="project" value="InterPro"/>
</dbReference>
<dbReference type="GO" id="GO:0004521">
    <property type="term" value="F:RNA endonuclease activity"/>
    <property type="evidence" value="ECO:0007669"/>
    <property type="project" value="TreeGrafter"/>
</dbReference>
<dbReference type="GO" id="GO:0006402">
    <property type="term" value="P:mRNA catabolic process"/>
    <property type="evidence" value="ECO:0007669"/>
    <property type="project" value="TreeGrafter"/>
</dbReference>
<dbReference type="GO" id="GO:0016075">
    <property type="term" value="P:rRNA catabolic process"/>
    <property type="evidence" value="ECO:0007669"/>
    <property type="project" value="TreeGrafter"/>
</dbReference>
<dbReference type="Gene3D" id="2.30.30.110">
    <property type="match status" value="1"/>
</dbReference>
<dbReference type="InterPro" id="IPR003477">
    <property type="entry name" value="PemK-like"/>
</dbReference>
<dbReference type="InterPro" id="IPR011067">
    <property type="entry name" value="Plasmid_toxin/cell-grow_inhib"/>
</dbReference>
<dbReference type="PANTHER" id="PTHR33988:SF2">
    <property type="entry name" value="ENDORIBONUCLEASE MAZF"/>
    <property type="match status" value="1"/>
</dbReference>
<dbReference type="PANTHER" id="PTHR33988">
    <property type="entry name" value="ENDORIBONUCLEASE MAZF-RELATED"/>
    <property type="match status" value="1"/>
</dbReference>
<dbReference type="Pfam" id="PF02452">
    <property type="entry name" value="PemK_toxin"/>
    <property type="match status" value="1"/>
</dbReference>
<dbReference type="SUPFAM" id="SSF50118">
    <property type="entry name" value="Cell growth inhibitor/plasmid maintenance toxic component"/>
    <property type="match status" value="1"/>
</dbReference>
<name>MAZF_MYCS2</name>